<name>ALL3_HUMJA</name>
<proteinExistence type="evidence at protein level"/>
<keyword id="KW-0020">Allergen</keyword>
<keyword id="KW-0903">Direct protein sequencing</keyword>
<dbReference type="EMBL" id="FJ967117">
    <property type="protein sequence ID" value="ADB97919.1"/>
    <property type="molecule type" value="mRNA"/>
</dbReference>
<dbReference type="Allergome" id="1239">
    <property type="allergen name" value="Hum j 3"/>
</dbReference>
<evidence type="ECO:0000269" key="1">
    <source>
    </source>
</evidence>
<evidence type="ECO:0000269" key="2">
    <source ref="1"/>
</evidence>
<evidence type="ECO:0000269" key="3">
    <source ref="2"/>
</evidence>
<evidence type="ECO:0000303" key="4">
    <source ref="2"/>
</evidence>
<evidence type="ECO:0000305" key="5"/>
<evidence type="ECO:0000312" key="6">
    <source>
        <dbReference type="EMBL" id="ADB97919.1"/>
    </source>
</evidence>
<organism>
    <name type="scientific">Humulus japonicus</name>
    <name type="common">Japanese hop</name>
    <dbReference type="NCBI Taxonomy" id="3485"/>
    <lineage>
        <taxon>Eukaryota</taxon>
        <taxon>Viridiplantae</taxon>
        <taxon>Streptophyta</taxon>
        <taxon>Embryophyta</taxon>
        <taxon>Tracheophyta</taxon>
        <taxon>Spermatophyta</taxon>
        <taxon>Magnoliopsida</taxon>
        <taxon>eudicotyledons</taxon>
        <taxon>Gunneridae</taxon>
        <taxon>Pentapetalae</taxon>
        <taxon>rosids</taxon>
        <taxon>fabids</taxon>
        <taxon>Rosales</taxon>
        <taxon>Cannabaceae</taxon>
        <taxon>Humulus</taxon>
    </lineage>
</organism>
<feature type="chain" id="PRO_0000430497" description="Allergen Hum j 3">
    <location>
        <begin position="1"/>
        <end position="86"/>
    </location>
</feature>
<protein>
    <recommendedName>
        <fullName evidence="4">Allergen Hum j 3</fullName>
    </recommendedName>
    <allergenName evidence="4">Hum j 3</allergenName>
</protein>
<comment type="mass spectrometry" mass="9607.0" error="0.2" method="MALDI" evidence="3"/>
<comment type="allergen">
    <text evidence="1 3">Causes an allergic reaction in human.</text>
</comment>
<comment type="miscellaneous">
    <text evidence="1">On the 2D-gel the determined pI of this protein is: 5.1, its MW is: 10 kDa.</text>
</comment>
<sequence length="86" mass="9614">MDNPFENGMKACTSLYDKYYQNCVMKLPPGACIDSENYRKCLTNHIGSCDIDTCFEDVSIACRSIYPSNYAECATTHHNICGDLQG</sequence>
<reference evidence="5 6" key="1">
    <citation type="submission" date="2009-04" db="EMBL/GenBank/DDBJ databases">
        <title>cDNA cloning and identification of a major allergen from Humulus scandens pollen, Hum s 3.</title>
        <authorList>
            <person name="Yin J."/>
            <person name="Zhou J."/>
            <person name="Cheng X."/>
        </authorList>
    </citation>
    <scope>NUCLEOTIDE SEQUENCE [MRNA]</scope>
    <source>
        <tissue evidence="2">Pollen</tissue>
    </source>
</reference>
<reference evidence="5 6" key="2">
    <citation type="submission" date="2009-04" db="UniProtKB">
        <title>cDNA cloning and identification of a major allergen from Humulus scandens pollen, Hum j 3.</title>
        <authorList>
            <person name="Yin J."/>
            <person name="Cheng X."/>
            <person name="Zhou J.X."/>
            <person name="Sun J.L."/>
        </authorList>
    </citation>
    <scope>PROTEIN SEQUENCE OF 1-10</scope>
    <scope>MASS SPECTROMETRY</scope>
    <scope>ALLERGEN</scope>
    <source>
        <tissue evidence="3">Pollen</tissue>
    </source>
</reference>
<reference evidence="5" key="3">
    <citation type="journal article" date="1999" name="Clin. Exp. Allergy">
        <title>Identification and characterization of the major allergen of the Humulus japonicus pollen.</title>
        <authorList>
            <person name="Park J.W."/>
            <person name="Ko S.H."/>
            <person name="Kim C.W."/>
            <person name="Jeoung B.J."/>
            <person name="Hong C.S."/>
        </authorList>
    </citation>
    <scope>PROTEIN SEQUENCE OF 2-21</scope>
    <scope>ALLERGEN</scope>
    <source>
        <tissue evidence="1">Pollen</tissue>
    </source>
</reference>
<accession>I1SKR9</accession>
<accession>P86278</accession>